<keyword id="KW-0067">ATP-binding</keyword>
<keyword id="KW-0963">Cytoplasm</keyword>
<keyword id="KW-0235">DNA replication</keyword>
<keyword id="KW-0238">DNA-binding</keyword>
<keyword id="KW-0446">Lipid-binding</keyword>
<keyword id="KW-0547">Nucleotide-binding</keyword>
<keyword id="KW-1185">Reference proteome</keyword>
<dbReference type="EMBL" id="CP000240">
    <property type="protein sequence ID" value="ABD01003.1"/>
    <property type="molecule type" value="Genomic_DNA"/>
</dbReference>
<dbReference type="RefSeq" id="WP_011431674.1">
    <property type="nucleotide sequence ID" value="NC_007776.1"/>
</dbReference>
<dbReference type="SMR" id="Q2JHS1"/>
<dbReference type="STRING" id="321332.CYB_0001"/>
<dbReference type="KEGG" id="cyb:CYB_0001"/>
<dbReference type="eggNOG" id="COG0593">
    <property type="taxonomic scope" value="Bacteria"/>
</dbReference>
<dbReference type="HOGENOM" id="CLU_026910_3_1_3"/>
<dbReference type="OrthoDB" id="9807019at2"/>
<dbReference type="Proteomes" id="UP000001938">
    <property type="component" value="Chromosome"/>
</dbReference>
<dbReference type="GO" id="GO:0005737">
    <property type="term" value="C:cytoplasm"/>
    <property type="evidence" value="ECO:0007669"/>
    <property type="project" value="UniProtKB-SubCell"/>
</dbReference>
<dbReference type="GO" id="GO:0005886">
    <property type="term" value="C:plasma membrane"/>
    <property type="evidence" value="ECO:0007669"/>
    <property type="project" value="TreeGrafter"/>
</dbReference>
<dbReference type="GO" id="GO:0005524">
    <property type="term" value="F:ATP binding"/>
    <property type="evidence" value="ECO:0007669"/>
    <property type="project" value="UniProtKB-UniRule"/>
</dbReference>
<dbReference type="GO" id="GO:0016887">
    <property type="term" value="F:ATP hydrolysis activity"/>
    <property type="evidence" value="ECO:0007669"/>
    <property type="project" value="InterPro"/>
</dbReference>
<dbReference type="GO" id="GO:0003688">
    <property type="term" value="F:DNA replication origin binding"/>
    <property type="evidence" value="ECO:0007669"/>
    <property type="project" value="UniProtKB-UniRule"/>
</dbReference>
<dbReference type="GO" id="GO:0008289">
    <property type="term" value="F:lipid binding"/>
    <property type="evidence" value="ECO:0007669"/>
    <property type="project" value="UniProtKB-KW"/>
</dbReference>
<dbReference type="GO" id="GO:0006270">
    <property type="term" value="P:DNA replication initiation"/>
    <property type="evidence" value="ECO:0007669"/>
    <property type="project" value="UniProtKB-UniRule"/>
</dbReference>
<dbReference type="GO" id="GO:0006275">
    <property type="term" value="P:regulation of DNA replication"/>
    <property type="evidence" value="ECO:0007669"/>
    <property type="project" value="UniProtKB-UniRule"/>
</dbReference>
<dbReference type="CDD" id="cd00009">
    <property type="entry name" value="AAA"/>
    <property type="match status" value="1"/>
</dbReference>
<dbReference type="CDD" id="cd06571">
    <property type="entry name" value="Bac_DnaA_C"/>
    <property type="match status" value="1"/>
</dbReference>
<dbReference type="FunFam" id="3.40.50.300:FF:000668">
    <property type="entry name" value="Chromosomal replication initiator protein DnaA"/>
    <property type="match status" value="1"/>
</dbReference>
<dbReference type="Gene3D" id="1.10.1750.10">
    <property type="match status" value="1"/>
</dbReference>
<dbReference type="Gene3D" id="1.10.8.60">
    <property type="match status" value="1"/>
</dbReference>
<dbReference type="Gene3D" id="3.30.300.180">
    <property type="match status" value="1"/>
</dbReference>
<dbReference type="Gene3D" id="3.40.50.300">
    <property type="entry name" value="P-loop containing nucleotide triphosphate hydrolases"/>
    <property type="match status" value="1"/>
</dbReference>
<dbReference type="HAMAP" id="MF_00377">
    <property type="entry name" value="DnaA_bact"/>
    <property type="match status" value="1"/>
</dbReference>
<dbReference type="InterPro" id="IPR003593">
    <property type="entry name" value="AAA+_ATPase"/>
</dbReference>
<dbReference type="InterPro" id="IPR001957">
    <property type="entry name" value="Chromosome_initiator_DnaA"/>
</dbReference>
<dbReference type="InterPro" id="IPR020591">
    <property type="entry name" value="Chromosome_initiator_DnaA-like"/>
</dbReference>
<dbReference type="InterPro" id="IPR018312">
    <property type="entry name" value="Chromosome_initiator_DnaA_CS"/>
</dbReference>
<dbReference type="InterPro" id="IPR013159">
    <property type="entry name" value="DnaA_C"/>
</dbReference>
<dbReference type="InterPro" id="IPR013317">
    <property type="entry name" value="DnaA_dom"/>
</dbReference>
<dbReference type="InterPro" id="IPR024633">
    <property type="entry name" value="DnaA_N_dom"/>
</dbReference>
<dbReference type="InterPro" id="IPR038454">
    <property type="entry name" value="DnaA_N_sf"/>
</dbReference>
<dbReference type="InterPro" id="IPR027417">
    <property type="entry name" value="P-loop_NTPase"/>
</dbReference>
<dbReference type="InterPro" id="IPR010921">
    <property type="entry name" value="Trp_repressor/repl_initiator"/>
</dbReference>
<dbReference type="NCBIfam" id="TIGR00362">
    <property type="entry name" value="DnaA"/>
    <property type="match status" value="1"/>
</dbReference>
<dbReference type="PANTHER" id="PTHR30050">
    <property type="entry name" value="CHROMOSOMAL REPLICATION INITIATOR PROTEIN DNAA"/>
    <property type="match status" value="1"/>
</dbReference>
<dbReference type="PANTHER" id="PTHR30050:SF2">
    <property type="entry name" value="CHROMOSOMAL REPLICATION INITIATOR PROTEIN DNAA"/>
    <property type="match status" value="1"/>
</dbReference>
<dbReference type="Pfam" id="PF00308">
    <property type="entry name" value="Bac_DnaA"/>
    <property type="match status" value="1"/>
</dbReference>
<dbReference type="Pfam" id="PF08299">
    <property type="entry name" value="Bac_DnaA_C"/>
    <property type="match status" value="1"/>
</dbReference>
<dbReference type="Pfam" id="PF11638">
    <property type="entry name" value="DnaA_N"/>
    <property type="match status" value="1"/>
</dbReference>
<dbReference type="PRINTS" id="PR00051">
    <property type="entry name" value="DNAA"/>
</dbReference>
<dbReference type="SMART" id="SM00382">
    <property type="entry name" value="AAA"/>
    <property type="match status" value="1"/>
</dbReference>
<dbReference type="SMART" id="SM00760">
    <property type="entry name" value="Bac_DnaA_C"/>
    <property type="match status" value="1"/>
</dbReference>
<dbReference type="SUPFAM" id="SSF52540">
    <property type="entry name" value="P-loop containing nucleoside triphosphate hydrolases"/>
    <property type="match status" value="1"/>
</dbReference>
<dbReference type="SUPFAM" id="SSF48295">
    <property type="entry name" value="TrpR-like"/>
    <property type="match status" value="1"/>
</dbReference>
<dbReference type="PROSITE" id="PS01008">
    <property type="entry name" value="DNAA"/>
    <property type="match status" value="1"/>
</dbReference>
<sequence>MDISLDQLWDEALCHLQVQLSRPTFEAWIKTARAESLVDNRLTICTPSEWARGWLQKHYASTITEVVQRVAGIPLQVEFSVSPHASVEAEPPSRAISPTSGRAGSLPASTTLGLEVGGSLPMRAPDLNPKYSFSRFVVGPNNRMAHAAALAVADKPGRAYNPLFLCGGVGLGKTHLMQAIGHYQLEANPQAKVFYVSTERFTNDLIDAIRRDSMQSFREHYRDVDILLVDDVQFIEGKEYTQEEFFHTFNTLHESGKQIVLAADRSPHLIPRLQERLCSRFSMGLIAEIQSPDIETRMAILKKKAEYEGMNLPADVIEYIATTYTSNIRELEGALIRAVAYVSISGLPMSVETIQPILNPPSEPKEITADMITDVVCEEFGIDRDSLLGSSRKRDISQARQIAMFLMRHYTNLSLPKIGDYFGGKDHTTVLYSCEKVSQLQRQSLQFERQLQKLVERLRVVANSRSS</sequence>
<protein>
    <recommendedName>
        <fullName evidence="1">Chromosomal replication initiator protein DnaA</fullName>
    </recommendedName>
</protein>
<reference key="1">
    <citation type="journal article" date="2007" name="ISME J.">
        <title>Population level functional diversity in a microbial community revealed by comparative genomic and metagenomic analyses.</title>
        <authorList>
            <person name="Bhaya D."/>
            <person name="Grossman A.R."/>
            <person name="Steunou A.-S."/>
            <person name="Khuri N."/>
            <person name="Cohan F.M."/>
            <person name="Hamamura N."/>
            <person name="Melendrez M.C."/>
            <person name="Bateson M.M."/>
            <person name="Ward D.M."/>
            <person name="Heidelberg J.F."/>
        </authorList>
    </citation>
    <scope>NUCLEOTIDE SEQUENCE [LARGE SCALE GENOMIC DNA]</scope>
    <source>
        <strain>JA-2-3B'a(2-13)</strain>
    </source>
</reference>
<organism>
    <name type="scientific">Synechococcus sp. (strain JA-2-3B'a(2-13))</name>
    <name type="common">Cyanobacteria bacterium Yellowstone B-Prime</name>
    <dbReference type="NCBI Taxonomy" id="321332"/>
    <lineage>
        <taxon>Bacteria</taxon>
        <taxon>Bacillati</taxon>
        <taxon>Cyanobacteriota</taxon>
        <taxon>Cyanophyceae</taxon>
        <taxon>Synechococcales</taxon>
        <taxon>Synechococcaceae</taxon>
        <taxon>Synechococcus</taxon>
    </lineage>
</organism>
<gene>
    <name evidence="1" type="primary">dnaA</name>
    <name type="ordered locus">CYB_0001</name>
</gene>
<name>DNAA_SYNJB</name>
<evidence type="ECO:0000255" key="1">
    <source>
        <dbReference type="HAMAP-Rule" id="MF_00377"/>
    </source>
</evidence>
<evidence type="ECO:0000256" key="2">
    <source>
        <dbReference type="SAM" id="MobiDB-lite"/>
    </source>
</evidence>
<proteinExistence type="inferred from homology"/>
<feature type="chain" id="PRO_1000048748" description="Chromosomal replication initiator protein DnaA">
    <location>
        <begin position="1"/>
        <end position="467"/>
    </location>
</feature>
<feature type="region of interest" description="Domain I, interacts with DnaA modulators" evidence="1">
    <location>
        <begin position="1"/>
        <end position="84"/>
    </location>
</feature>
<feature type="region of interest" description="Domain II" evidence="1">
    <location>
        <begin position="84"/>
        <end position="125"/>
    </location>
</feature>
<feature type="region of interest" description="Disordered" evidence="2">
    <location>
        <begin position="89"/>
        <end position="108"/>
    </location>
</feature>
<feature type="region of interest" description="Domain III, AAA+ region" evidence="1">
    <location>
        <begin position="126"/>
        <end position="342"/>
    </location>
</feature>
<feature type="region of interest" description="Domain IV, binds dsDNA" evidence="1">
    <location>
        <begin position="343"/>
        <end position="467"/>
    </location>
</feature>
<feature type="compositionally biased region" description="Polar residues" evidence="2">
    <location>
        <begin position="96"/>
        <end position="108"/>
    </location>
</feature>
<feature type="binding site" evidence="1">
    <location>
        <position position="170"/>
    </location>
    <ligand>
        <name>ATP</name>
        <dbReference type="ChEBI" id="CHEBI:30616"/>
    </ligand>
</feature>
<feature type="binding site" evidence="1">
    <location>
        <position position="172"/>
    </location>
    <ligand>
        <name>ATP</name>
        <dbReference type="ChEBI" id="CHEBI:30616"/>
    </ligand>
</feature>
<feature type="binding site" evidence="1">
    <location>
        <position position="173"/>
    </location>
    <ligand>
        <name>ATP</name>
        <dbReference type="ChEBI" id="CHEBI:30616"/>
    </ligand>
</feature>
<feature type="binding site" evidence="1">
    <location>
        <position position="174"/>
    </location>
    <ligand>
        <name>ATP</name>
        <dbReference type="ChEBI" id="CHEBI:30616"/>
    </ligand>
</feature>
<accession>Q2JHS1</accession>
<comment type="function">
    <text evidence="1">Plays an essential role in the initiation and regulation of chromosomal replication. ATP-DnaA binds to the origin of replication (oriC) to initiate formation of the DNA replication initiation complex once per cell cycle. Binds the DnaA box (a 9 base pair repeat at the origin) and separates the double-stranded (ds)DNA. Forms a right-handed helical filament on oriC DNA; dsDNA binds to the exterior of the filament while single-stranded (ss)DNA is stabiized in the filament's interior. The ATP-DnaA-oriC complex binds and stabilizes one strand of the AT-rich DNA unwinding element (DUE), permitting loading of DNA polymerase. After initiation quickly degrades to an ADP-DnaA complex that is not apt for DNA replication. Binds acidic phospholipids.</text>
</comment>
<comment type="subunit">
    <text evidence="1">Oligomerizes as a right-handed, spiral filament on DNA at oriC.</text>
</comment>
<comment type="subcellular location">
    <subcellularLocation>
        <location evidence="1">Cytoplasm</location>
    </subcellularLocation>
</comment>
<comment type="domain">
    <text evidence="1">Domain I is involved in oligomerization and binding regulators, domain II is flexibile and of varying length in different bacteria, domain III forms the AAA+ region, while domain IV binds dsDNA.</text>
</comment>
<comment type="similarity">
    <text evidence="1">Belongs to the DnaA family.</text>
</comment>